<evidence type="ECO:0000255" key="1">
    <source>
        <dbReference type="HAMAP-Rule" id="MF_00023"/>
    </source>
</evidence>
<evidence type="ECO:0000256" key="2">
    <source>
        <dbReference type="SAM" id="MobiDB-lite"/>
    </source>
</evidence>
<protein>
    <recommendedName>
        <fullName evidence="1">SsrA-binding protein</fullName>
    </recommendedName>
    <alternativeName>
        <fullName evidence="1">Small protein B</fullName>
    </alternativeName>
</protein>
<keyword id="KW-0963">Cytoplasm</keyword>
<keyword id="KW-0694">RNA-binding</keyword>
<comment type="function">
    <text evidence="1">Required for rescue of stalled ribosomes mediated by trans-translation. Binds to transfer-messenger RNA (tmRNA), required for stable association of tmRNA with ribosomes. tmRNA and SmpB together mimic tRNA shape, replacing the anticodon stem-loop with SmpB. tmRNA is encoded by the ssrA gene; the 2 termini fold to resemble tRNA(Ala) and it encodes a 'tag peptide', a short internal open reading frame. During trans-translation Ala-aminoacylated tmRNA acts like a tRNA, entering the A-site of stalled ribosomes, displacing the stalled mRNA. The ribosome then switches to translate the ORF on the tmRNA; the nascent peptide is terminated with the 'tag peptide' encoded by the tmRNA and targeted for degradation. The ribosome is freed to recommence translation, which seems to be the essential function of trans-translation.</text>
</comment>
<comment type="subcellular location">
    <subcellularLocation>
        <location evidence="1">Cytoplasm</location>
    </subcellularLocation>
    <text evidence="1">The tmRNA-SmpB complex associates with stalled 70S ribosomes.</text>
</comment>
<comment type="similarity">
    <text evidence="1">Belongs to the SmpB family.</text>
</comment>
<name>SSRP_PROM9</name>
<accession>Q318C5</accession>
<proteinExistence type="inferred from homology"/>
<dbReference type="EMBL" id="CP000111">
    <property type="protein sequence ID" value="ABB50770.1"/>
    <property type="molecule type" value="Genomic_DNA"/>
</dbReference>
<dbReference type="RefSeq" id="WP_011377251.1">
    <property type="nucleotide sequence ID" value="NC_007577.1"/>
</dbReference>
<dbReference type="SMR" id="Q318C5"/>
<dbReference type="STRING" id="74546.PMT9312_1709"/>
<dbReference type="KEGG" id="pmi:PMT9312_1709"/>
<dbReference type="eggNOG" id="COG0691">
    <property type="taxonomic scope" value="Bacteria"/>
</dbReference>
<dbReference type="HOGENOM" id="CLU_108953_0_1_3"/>
<dbReference type="OrthoDB" id="9805462at2"/>
<dbReference type="Proteomes" id="UP000002715">
    <property type="component" value="Chromosome"/>
</dbReference>
<dbReference type="GO" id="GO:0005829">
    <property type="term" value="C:cytosol"/>
    <property type="evidence" value="ECO:0007669"/>
    <property type="project" value="TreeGrafter"/>
</dbReference>
<dbReference type="GO" id="GO:0003723">
    <property type="term" value="F:RNA binding"/>
    <property type="evidence" value="ECO:0007669"/>
    <property type="project" value="UniProtKB-UniRule"/>
</dbReference>
<dbReference type="GO" id="GO:0070929">
    <property type="term" value="P:trans-translation"/>
    <property type="evidence" value="ECO:0007669"/>
    <property type="project" value="UniProtKB-UniRule"/>
</dbReference>
<dbReference type="CDD" id="cd09294">
    <property type="entry name" value="SmpB"/>
    <property type="match status" value="1"/>
</dbReference>
<dbReference type="Gene3D" id="2.40.280.10">
    <property type="match status" value="1"/>
</dbReference>
<dbReference type="HAMAP" id="MF_00023">
    <property type="entry name" value="SmpB"/>
    <property type="match status" value="1"/>
</dbReference>
<dbReference type="InterPro" id="IPR023620">
    <property type="entry name" value="SmpB"/>
</dbReference>
<dbReference type="InterPro" id="IPR000037">
    <property type="entry name" value="SsrA-bd_prot"/>
</dbReference>
<dbReference type="InterPro" id="IPR020081">
    <property type="entry name" value="SsrA-bd_prot_CS"/>
</dbReference>
<dbReference type="NCBIfam" id="NF003843">
    <property type="entry name" value="PRK05422.1"/>
    <property type="match status" value="1"/>
</dbReference>
<dbReference type="NCBIfam" id="TIGR00086">
    <property type="entry name" value="smpB"/>
    <property type="match status" value="1"/>
</dbReference>
<dbReference type="PANTHER" id="PTHR30308:SF2">
    <property type="entry name" value="SSRA-BINDING PROTEIN"/>
    <property type="match status" value="1"/>
</dbReference>
<dbReference type="PANTHER" id="PTHR30308">
    <property type="entry name" value="TMRNA-BINDING COMPONENT OF TRANS-TRANSLATION TAGGING COMPLEX"/>
    <property type="match status" value="1"/>
</dbReference>
<dbReference type="Pfam" id="PF01668">
    <property type="entry name" value="SmpB"/>
    <property type="match status" value="1"/>
</dbReference>
<dbReference type="SUPFAM" id="SSF74982">
    <property type="entry name" value="Small protein B (SmpB)"/>
    <property type="match status" value="1"/>
</dbReference>
<dbReference type="PROSITE" id="PS01317">
    <property type="entry name" value="SSRP"/>
    <property type="match status" value="1"/>
</dbReference>
<sequence length="164" mass="18888">MAKNSNKVRKNTNKENNFKRLAENRYAKFQYAISETIEAGIELLGTEVKSIRNGKANLRDGYCSFRDGEILLLNVHISPHKNVGSFFNHDPLRNRKLLLHKKEIIKLKSNTEKKGMTIVPLSMYLKGSWIKLTLGVGKGKKLHDKRQDEKQKSIKKEINSVLKR</sequence>
<organism>
    <name type="scientific">Prochlorococcus marinus (strain MIT 9312)</name>
    <dbReference type="NCBI Taxonomy" id="74546"/>
    <lineage>
        <taxon>Bacteria</taxon>
        <taxon>Bacillati</taxon>
        <taxon>Cyanobacteriota</taxon>
        <taxon>Cyanophyceae</taxon>
        <taxon>Synechococcales</taxon>
        <taxon>Prochlorococcaceae</taxon>
        <taxon>Prochlorococcus</taxon>
    </lineage>
</organism>
<feature type="chain" id="PRO_0000331079" description="SsrA-binding protein">
    <location>
        <begin position="1"/>
        <end position="164"/>
    </location>
</feature>
<feature type="region of interest" description="Disordered" evidence="2">
    <location>
        <begin position="143"/>
        <end position="164"/>
    </location>
</feature>
<feature type="compositionally biased region" description="Basic and acidic residues" evidence="2">
    <location>
        <begin position="145"/>
        <end position="158"/>
    </location>
</feature>
<reference key="1">
    <citation type="journal article" date="2006" name="Science">
        <title>Genomic islands and the ecology and evolution of Prochlorococcus.</title>
        <authorList>
            <person name="Coleman M.L."/>
            <person name="Sullivan M.B."/>
            <person name="Martiny A.C."/>
            <person name="Steglich C."/>
            <person name="Barry K."/>
            <person name="Delong E.F."/>
            <person name="Chisholm S.W."/>
        </authorList>
    </citation>
    <scope>NUCLEOTIDE SEQUENCE [LARGE SCALE GENOMIC DNA]</scope>
    <source>
        <strain>MIT 9312</strain>
    </source>
</reference>
<gene>
    <name evidence="1" type="primary">smpB</name>
    <name type="ordered locus">PMT9312_1709</name>
</gene>